<organism>
    <name type="scientific">Picrophilus torridus (strain ATCC 700027 / DSM 9790 / JCM 10055 / NBRC 100828 / KAW 2/3)</name>
    <dbReference type="NCBI Taxonomy" id="1122961"/>
    <lineage>
        <taxon>Archaea</taxon>
        <taxon>Methanobacteriati</taxon>
        <taxon>Thermoplasmatota</taxon>
        <taxon>Thermoplasmata</taxon>
        <taxon>Thermoplasmatales</taxon>
        <taxon>Picrophilaceae</taxon>
        <taxon>Picrophilus</taxon>
    </lineage>
</organism>
<dbReference type="EMBL" id="AE017261">
    <property type="protein sequence ID" value="AAT43235.1"/>
    <property type="molecule type" value="Genomic_DNA"/>
</dbReference>
<dbReference type="RefSeq" id="WP_011177451.1">
    <property type="nucleotide sequence ID" value="NC_005877.1"/>
</dbReference>
<dbReference type="SMR" id="Q6L1B7"/>
<dbReference type="FunCoup" id="Q6L1B7">
    <property type="interactions" value="202"/>
</dbReference>
<dbReference type="STRING" id="263820.PTO0650"/>
<dbReference type="PaxDb" id="263820-PTO0650"/>
<dbReference type="GeneID" id="2844418"/>
<dbReference type="KEGG" id="pto:PTO0650"/>
<dbReference type="PATRIC" id="fig|263820.9.peg.683"/>
<dbReference type="eggNOG" id="arCOG04095">
    <property type="taxonomic scope" value="Archaea"/>
</dbReference>
<dbReference type="HOGENOM" id="CLU_095071_3_0_2"/>
<dbReference type="InParanoid" id="Q6L1B7"/>
<dbReference type="OrthoDB" id="23569at2157"/>
<dbReference type="Proteomes" id="UP000000438">
    <property type="component" value="Chromosome"/>
</dbReference>
<dbReference type="GO" id="GO:0022625">
    <property type="term" value="C:cytosolic large ribosomal subunit"/>
    <property type="evidence" value="ECO:0007669"/>
    <property type="project" value="TreeGrafter"/>
</dbReference>
<dbReference type="GO" id="GO:0070180">
    <property type="term" value="F:large ribosomal subunit rRNA binding"/>
    <property type="evidence" value="ECO:0007669"/>
    <property type="project" value="TreeGrafter"/>
</dbReference>
<dbReference type="GO" id="GO:0003735">
    <property type="term" value="F:structural constituent of ribosome"/>
    <property type="evidence" value="ECO:0007669"/>
    <property type="project" value="InterPro"/>
</dbReference>
<dbReference type="GO" id="GO:0006412">
    <property type="term" value="P:translation"/>
    <property type="evidence" value="ECO:0007669"/>
    <property type="project" value="UniProtKB-UniRule"/>
</dbReference>
<dbReference type="CDD" id="cd00337">
    <property type="entry name" value="Ribosomal_uL14"/>
    <property type="match status" value="1"/>
</dbReference>
<dbReference type="FunFam" id="2.40.150.20:FF:000007">
    <property type="entry name" value="50S ribosomal protein L14"/>
    <property type="match status" value="1"/>
</dbReference>
<dbReference type="Gene3D" id="2.40.150.20">
    <property type="entry name" value="Ribosomal protein L14"/>
    <property type="match status" value="1"/>
</dbReference>
<dbReference type="HAMAP" id="MF_01367">
    <property type="entry name" value="Ribosomal_uL14"/>
    <property type="match status" value="1"/>
</dbReference>
<dbReference type="InterPro" id="IPR000218">
    <property type="entry name" value="Ribosomal_uL14"/>
</dbReference>
<dbReference type="InterPro" id="IPR019971">
    <property type="entry name" value="Ribosomal_uL14_arc"/>
</dbReference>
<dbReference type="InterPro" id="IPR019972">
    <property type="entry name" value="Ribosomal_uL14_CS"/>
</dbReference>
<dbReference type="InterPro" id="IPR036853">
    <property type="entry name" value="Ribosomal_uL14_sf"/>
</dbReference>
<dbReference type="NCBIfam" id="NF006344">
    <property type="entry name" value="PRK08571.1"/>
    <property type="match status" value="1"/>
</dbReference>
<dbReference type="NCBIfam" id="TIGR03673">
    <property type="entry name" value="uL14_arch"/>
    <property type="match status" value="1"/>
</dbReference>
<dbReference type="PANTHER" id="PTHR11761">
    <property type="entry name" value="50S/60S RIBOSOMAL PROTEIN L14/L23"/>
    <property type="match status" value="1"/>
</dbReference>
<dbReference type="PANTHER" id="PTHR11761:SF8">
    <property type="entry name" value="LARGE RIBOSOMAL SUBUNIT PROTEIN UL14"/>
    <property type="match status" value="1"/>
</dbReference>
<dbReference type="Pfam" id="PF00238">
    <property type="entry name" value="Ribosomal_L14"/>
    <property type="match status" value="1"/>
</dbReference>
<dbReference type="SMART" id="SM01374">
    <property type="entry name" value="Ribosomal_L14"/>
    <property type="match status" value="1"/>
</dbReference>
<dbReference type="SUPFAM" id="SSF50193">
    <property type="entry name" value="Ribosomal protein L14"/>
    <property type="match status" value="1"/>
</dbReference>
<dbReference type="PROSITE" id="PS00049">
    <property type="entry name" value="RIBOSOMAL_L14"/>
    <property type="match status" value="1"/>
</dbReference>
<sequence length="132" mass="14184">MKGISGRETRGLPLGALIPCVDNTGAKMISLIDVKALHTVAKRIPAAGVGDMFIASVKKGTPEMRSKVVYAVVVRQRRPYRRADGTMIEFEDNAAVLVTPDGEVRGSEIKGPVAREAAERWPRIAAISSTIV</sequence>
<accession>Q6L1B7</accession>
<gene>
    <name evidence="1" type="primary">rpl14</name>
    <name type="ordered locus">PTO0650</name>
</gene>
<comment type="function">
    <text evidence="1">Binds to 23S rRNA. Forms part of two intersubunit bridges in the 70S ribosome.</text>
</comment>
<comment type="subunit">
    <text evidence="1">Part of the 50S ribosomal subunit. Forms a cluster with proteins L3 and L24e, part of which may contact the 16S rRNA in 2 intersubunit bridges.</text>
</comment>
<comment type="similarity">
    <text evidence="1">Belongs to the universal ribosomal protein uL14 family.</text>
</comment>
<keyword id="KW-0687">Ribonucleoprotein</keyword>
<keyword id="KW-0689">Ribosomal protein</keyword>
<keyword id="KW-0694">RNA-binding</keyword>
<keyword id="KW-0699">rRNA-binding</keyword>
<reference key="1">
    <citation type="journal article" date="2004" name="Proc. Natl. Acad. Sci. U.S.A.">
        <title>Genome sequence of Picrophilus torridus and its implications for life around pH 0.</title>
        <authorList>
            <person name="Fuetterer O."/>
            <person name="Angelov A."/>
            <person name="Liesegang H."/>
            <person name="Gottschalk G."/>
            <person name="Schleper C."/>
            <person name="Schepers B."/>
            <person name="Dock C."/>
            <person name="Antranikian G."/>
            <person name="Liebl W."/>
        </authorList>
    </citation>
    <scope>NUCLEOTIDE SEQUENCE [LARGE SCALE GENOMIC DNA]</scope>
    <source>
        <strain>ATCC 700027 / DSM 9790 / JCM 10055 / NBRC 100828 / KAW 2/3</strain>
    </source>
</reference>
<protein>
    <recommendedName>
        <fullName evidence="1">Large ribosomal subunit protein uL14</fullName>
    </recommendedName>
    <alternativeName>
        <fullName evidence="2">50S ribosomal protein L14</fullName>
    </alternativeName>
</protein>
<proteinExistence type="inferred from homology"/>
<evidence type="ECO:0000255" key="1">
    <source>
        <dbReference type="HAMAP-Rule" id="MF_01367"/>
    </source>
</evidence>
<evidence type="ECO:0000305" key="2"/>
<feature type="chain" id="PRO_0000266610" description="Large ribosomal subunit protein uL14">
    <location>
        <begin position="1"/>
        <end position="132"/>
    </location>
</feature>
<name>RL14_PICTO</name>